<accession>P24851</accession>
<accession>Q84248</accession>
<accession>Q90051</accession>
<reference key="1">
    <citation type="journal article" date="1990" name="J. Gen. Virol.">
        <title>The complete nucleotide sequence of bovine polyomavirus.</title>
        <authorList>
            <person name="Schuurman R."/>
            <person name="Sol C."/>
            <person name="van der Noordaa J."/>
        </authorList>
    </citation>
    <scope>NUCLEOTIDE SEQUENCE [GENOMIC DNA]</scope>
</reference>
<reference key="2">
    <citation type="journal article" date="1992" name="J. Gen. Virol.">
        <title>Analysis of splice sites in the early region of bovine polyomavirus: evidence for a unique pattern of large T mRNA splicing.</title>
        <authorList>
            <person name="Schuurman R."/>
            <person name="Jacobs M."/>
            <person name="van Strien A."/>
            <person name="van der Noordaa J."/>
            <person name="Sol C."/>
        </authorList>
    </citation>
    <scope>NUCLEOTIDE SEQUENCE [MRNA] OF 1-84</scope>
    <scope>ALTERNATIVE SPLICING</scope>
</reference>
<keyword id="KW-0025">Alternative splicing</keyword>
<keyword id="KW-0067">ATP-binding</keyword>
<keyword id="KW-0235">DNA replication</keyword>
<keyword id="KW-0238">DNA-binding</keyword>
<keyword id="KW-0244">Early protein</keyword>
<keyword id="KW-1078">G1/S host cell cycle checkpoint dysregulation by virus</keyword>
<keyword id="KW-0347">Helicase</keyword>
<keyword id="KW-1048">Host nucleus</keyword>
<keyword id="KW-0945">Host-virus interaction</keyword>
<keyword id="KW-0378">Hydrolase</keyword>
<keyword id="KW-1090">Inhibition of host innate immune response by virus</keyword>
<keyword id="KW-1114">Inhibition of host interferon signaling pathway by virus</keyword>
<keyword id="KW-1096">Inhibition of host JAK1 by virus</keyword>
<keyword id="KW-0922">Interferon antiviral system evasion</keyword>
<keyword id="KW-0413">Isomerase</keyword>
<keyword id="KW-0479">Metal-binding</keyword>
<keyword id="KW-1121">Modulation of host cell cycle by virus</keyword>
<keyword id="KW-0547">Nucleotide-binding</keyword>
<keyword id="KW-0553">Oncogene</keyword>
<keyword id="KW-0597">Phosphoprotein</keyword>
<keyword id="KW-1185">Reference proteome</keyword>
<keyword id="KW-0899">Viral immunoevasion</keyword>
<keyword id="KW-0862">Zinc</keyword>
<keyword id="KW-0863">Zinc-finger</keyword>
<organism>
    <name type="scientific">Bovine polyomavirus</name>
    <name type="common">BPyV</name>
    <name type="synonym">Bos taurus polyomavirus 1</name>
    <dbReference type="NCBI Taxonomy" id="1891754"/>
    <lineage>
        <taxon>Viruses</taxon>
        <taxon>Monodnaviria</taxon>
        <taxon>Shotokuvirae</taxon>
        <taxon>Cossaviricota</taxon>
        <taxon>Papovaviricetes</taxon>
        <taxon>Sepolyvirales</taxon>
        <taxon>Polyomaviridae</taxon>
        <taxon>Epsilonpolyomavirus</taxon>
    </lineage>
</organism>
<protein>
    <recommendedName>
        <fullName>Large T antigen</fullName>
        <shortName>LT</shortName>
        <shortName>LT-AG</shortName>
        <ecNumber evidence="1">5.6.2.4</ecNumber>
    </recommendedName>
    <alternativeName>
        <fullName evidence="7">DNA 3'-5' helicase large T antigen</fullName>
    </alternativeName>
</protein>
<feature type="chain" id="PRO_0000115038" description="Large T antigen">
    <location>
        <begin position="1"/>
        <end position="619"/>
    </location>
</feature>
<feature type="domain" description="J" evidence="2">
    <location>
        <begin position="10"/>
        <end position="73"/>
    </location>
</feature>
<feature type="domain" description="SF3 helicase" evidence="3">
    <location>
        <begin position="391"/>
        <end position="586"/>
    </location>
</feature>
<feature type="DNA-binding region" description="T-ag OBD" evidence="4">
    <location>
        <begin position="132"/>
        <end position="245"/>
    </location>
</feature>
<feature type="zinc finger region" description="T-ag D1-type" evidence="5">
    <location>
        <begin position="255"/>
        <end position="348"/>
    </location>
</feature>
<feature type="region of interest" description="Disordered" evidence="6">
    <location>
        <begin position="98"/>
        <end position="131"/>
    </location>
</feature>
<feature type="short sequence motif" description="LXCXE motif" evidence="1">
    <location>
        <begin position="93"/>
        <end position="97"/>
    </location>
</feature>
<feature type="short sequence motif" description="Nuclear localization signal" evidence="1">
    <location>
        <begin position="121"/>
        <end position="128"/>
    </location>
</feature>
<feature type="compositionally biased region" description="Acidic residues" evidence="6">
    <location>
        <begin position="98"/>
        <end position="108"/>
    </location>
</feature>
<feature type="compositionally biased region" description="Polar residues" evidence="6">
    <location>
        <begin position="110"/>
        <end position="120"/>
    </location>
</feature>
<feature type="binding site" evidence="5">
    <location>
        <position position="292"/>
    </location>
    <ligand>
        <name>Zn(2+)</name>
        <dbReference type="ChEBI" id="CHEBI:29105"/>
    </ligand>
</feature>
<feature type="binding site" evidence="5">
    <location>
        <position position="295"/>
    </location>
    <ligand>
        <name>Zn(2+)</name>
        <dbReference type="ChEBI" id="CHEBI:29105"/>
    </ligand>
</feature>
<feature type="binding site" evidence="5">
    <location>
        <position position="303"/>
    </location>
    <ligand>
        <name>Zn(2+)</name>
        <dbReference type="ChEBI" id="CHEBI:29105"/>
    </ligand>
</feature>
<feature type="binding site" evidence="5">
    <location>
        <position position="307"/>
    </location>
    <ligand>
        <name>Zn(2+)</name>
        <dbReference type="ChEBI" id="CHEBI:29105"/>
    </ligand>
</feature>
<feature type="binding site" evidence="3">
    <location>
        <begin position="417"/>
        <end position="424"/>
    </location>
    <ligand>
        <name>ATP</name>
        <dbReference type="ChEBI" id="CHEBI:30616"/>
    </ligand>
</feature>
<feature type="modified residue" description="Phosphoserine; by host" evidence="1">
    <location>
        <position position="102"/>
    </location>
</feature>
<feature type="modified residue" description="Phosphothreonine; by host" evidence="1">
    <location>
        <position position="120"/>
    </location>
</feature>
<organismHost>
    <name type="scientific">Bos taurus</name>
    <name type="common">Bovine</name>
    <dbReference type="NCBI Taxonomy" id="9913"/>
</organismHost>
<sequence>MELTSEEYEELRGLLGTPDIGNADTLKKAFLKACKVHHPDKGGNEEAMKRLLYLYNKAKIAASATTSQVPEYGTSQWEQWWEEFNQGFDEQDLHCDEELEPSDNEEENPAGSQAPGSQATPPKKPRTSPDFPEVLKEYVSNALFTNRTYNCFIIFTTAEKGKELYPCIQAAYKCTFIALYMYNGDSVLYIITVGKHRVNAMENLCSKKCTVSFLQAKGVLKPQEAYNVCCTFELISQNIQGGLPSSFFNPVQEEEKSVNWKLISEFACSIKCTDPLLLMALYLEFTTAPEACKVCDNPRRLEHRRHHTKDHTLNALLFQDSKTQKTICNQACDTVLAKRRLDMKTLTRNELLVQRWQGLFQEMEDLFGARGEEHLAHRMAAVMWLNALHPNMPDVIFNYIKMVVENKPKQRYLLLKGPVNCGKTTVAAGLIGLCGGAYLNINCPPERLAFELGMAIDQFTVVFEDVKGKKSSKSSLQTGIGFENLDNLRDHLDGAVPVNLERKHQNKVTQIFPPGIVTCNEYDIPLTVKIRMYQKVELLHNYNLYKSLKNTEEVGKKRYLQSGITWLLLLIYFRSVDDFTEKLQECVVKWKERIETEVGDMWLLTMKENIEQGKNILEK</sequence>
<comment type="function">
    <text evidence="1">Isoform large T antigen is a key early protein essential for both driving viral replication and inducing cellular transformation. Plays a role in viral genome replication by driving entry of quiescent cells into the cell cycle and by autoregulating the synthesis of viral early mRNA. Displays highly oncogenic activities by corrupting the host cellular checkpoint mechanisms that guard cell division and the transcription, replication, and repair of DNA. Participates in the modulation of cellular gene expression preceeding viral DNA replication. This step involves binding to host key cell cycle regulators retinoblastoma protein RB1/pRb and TP53. Induces the disassembly of host E2F1 transcription factors from RB1, thus promoting transcriptional activation of E2F1-regulated S-phase genes. Inhibits host TP53 binding to DNA, abrogating the ability of TP53 to stimulate gene expression. Plays the role of a TFIID-associated factor (TAF) in transcription initiation for all three RNA polymerases, by stabilizing the TBP-TFIIA complex on promoters. Initiates viral DNA replication and unwinding via interactions with the viral origin of replication. Binds two adjacent sites in the SV40 origin. The replication fork movement is facilitated by Large T antigen helicase activity. Has processive 3'-5' DNA helicase activity which requires a short 3' single-stranded region and ATP. Activates the transcription of viral late mRNA, through host TBP and TFIIA stabilization. Interferes with histone deacetylation mediated by HDAC1, leading to activation of transcription.</text>
</comment>
<comment type="catalytic activity">
    <reaction evidence="1">
        <text>Couples ATP hydrolysis with the unwinding of duplex DNA by translocating in the 3'-5' direction.</text>
        <dbReference type="EC" id="5.6.2.4"/>
    </reaction>
</comment>
<comment type="catalytic activity">
    <reaction evidence="1">
        <text>ATP + H2O = ADP + phosphate + H(+)</text>
        <dbReference type="Rhea" id="RHEA:13065"/>
        <dbReference type="ChEBI" id="CHEBI:15377"/>
        <dbReference type="ChEBI" id="CHEBI:15378"/>
        <dbReference type="ChEBI" id="CHEBI:30616"/>
        <dbReference type="ChEBI" id="CHEBI:43474"/>
        <dbReference type="ChEBI" id="CHEBI:456216"/>
        <dbReference type="EC" id="5.6.2.4"/>
    </reaction>
</comment>
<comment type="cofactor">
    <cofactor evidence="1">
        <name>Mg(2+)</name>
        <dbReference type="ChEBI" id="CHEBI:18420"/>
    </cofactor>
    <text evidence="1">DNA helicase activity requires Mg(2+).</text>
</comment>
<comment type="subunit">
    <text evidence="1">Forms homohexamers in the presence of ATP. Interacts with host HDAC1. Interacts (via LXCXE domain) with host RB1; the interaction induces the aberrant dissociation of RB1-E2F1 complex thereby disrupting RB1's activity. Interacts (via LXCXE domain) with host pRB-related proteins RBL1 and RBL2. Interacts (via C-terminus) with host TOP1 and POLA1 allowing DNA replication. Interacts with host TP53, inhibiting TP53 binding to DNA. Interacts with host preinitiation complex components TBP, TFIIA and TFIID to regulate transcription initiation.</text>
</comment>
<comment type="subcellular location">
    <subcellularLocation>
        <location evidence="1">Host nucleus</location>
    </subcellularLocation>
</comment>
<comment type="alternative products">
    <event type="alternative splicing"/>
    <isoform>
        <id>P24851-1</id>
        <name>Large T antigen</name>
        <sequence type="displayed"/>
    </isoform>
    <isoform>
        <id>P24852-1</id>
        <name>Small t antigen</name>
        <sequence type="external"/>
    </isoform>
</comment>
<comment type="domain">
    <text evidence="1">The J domain is essential for multiple viral activities, including virion assembly, viral DNA replication, transformation and transcriptional activation.</text>
</comment>
<comment type="domain">
    <text evidence="1">The LXCXE motif specifically binds to host pRB, RBL1, and RBL2.</text>
</comment>
<comment type="domain">
    <text evidence="1">The zinc finger region contributes to protein-protein interactions essential for the assembly of stable T-antigen hexamers at the origin of replication. The hexamers are required for subsequent alterations in the structure of origin DNA.</text>
</comment>
<comment type="domain">
    <text evidence="1">The ATP binding/ATPase domain is required for proper hexamer assembly and helicase activity.</text>
</comment>
<comment type="PTM">
    <text evidence="1">Phosphorylated on both serine and threonine residues. Small t antigen inhibits the dephosphorylation by the AC form of PP2A.</text>
</comment>
<comment type="PTM">
    <text evidence="1">O-Glycosylated near the C-terminal region.</text>
</comment>
<comment type="PTM">
    <text evidence="1">Acetylated by CBP in a TP53-dependent manner.</text>
</comment>
<comment type="sequence caution" evidence="7">
    <conflict type="erroneous gene model prediction">
        <sequence resource="EMBL-CDS" id="BAA03040"/>
    </conflict>
</comment>
<name>LT_POVBO</name>
<dbReference type="EC" id="5.6.2.4" evidence="1"/>
<dbReference type="EMBL" id="D13942">
    <property type="protein sequence ID" value="BAA03040.1"/>
    <property type="status" value="ALT_SEQ"/>
    <property type="molecule type" value="Genomic_DNA"/>
</dbReference>
<dbReference type="EMBL" id="S48202">
    <property type="protein sequence ID" value="AAB24090.2"/>
    <property type="molecule type" value="mRNA"/>
</dbReference>
<dbReference type="PIR" id="JU0357">
    <property type="entry name" value="TVVPBP"/>
</dbReference>
<dbReference type="RefSeq" id="NP_040788.2">
    <molecule id="P24851-1"/>
    <property type="nucleotide sequence ID" value="NC_001442.1"/>
</dbReference>
<dbReference type="SMR" id="P24851"/>
<dbReference type="GeneID" id="29031001"/>
<dbReference type="KEGG" id="vg:29031001"/>
<dbReference type="OrthoDB" id="14669at10239"/>
<dbReference type="Proteomes" id="UP000008476">
    <property type="component" value="Genome"/>
</dbReference>
<dbReference type="GO" id="GO:0042025">
    <property type="term" value="C:host cell nucleus"/>
    <property type="evidence" value="ECO:0007669"/>
    <property type="project" value="UniProtKB-SubCell"/>
</dbReference>
<dbReference type="GO" id="GO:0005524">
    <property type="term" value="F:ATP binding"/>
    <property type="evidence" value="ECO:0007669"/>
    <property type="project" value="UniProtKB-KW"/>
</dbReference>
<dbReference type="GO" id="GO:0016887">
    <property type="term" value="F:ATP hydrolysis activity"/>
    <property type="evidence" value="ECO:0007669"/>
    <property type="project" value="RHEA"/>
</dbReference>
<dbReference type="GO" id="GO:0003688">
    <property type="term" value="F:DNA replication origin binding"/>
    <property type="evidence" value="ECO:0007669"/>
    <property type="project" value="InterPro"/>
</dbReference>
<dbReference type="GO" id="GO:0004386">
    <property type="term" value="F:helicase activity"/>
    <property type="evidence" value="ECO:0007669"/>
    <property type="project" value="UniProtKB-KW"/>
</dbReference>
<dbReference type="GO" id="GO:0008270">
    <property type="term" value="F:zinc ion binding"/>
    <property type="evidence" value="ECO:0007669"/>
    <property type="project" value="UniProtKB-KW"/>
</dbReference>
<dbReference type="GO" id="GO:0006260">
    <property type="term" value="P:DNA replication"/>
    <property type="evidence" value="ECO:0007669"/>
    <property type="project" value="UniProtKB-KW"/>
</dbReference>
<dbReference type="GO" id="GO:0039645">
    <property type="term" value="P:symbiont-mediated perturbation of host cell cycle G1/S transition checkpoint"/>
    <property type="evidence" value="ECO:0007669"/>
    <property type="project" value="UniProtKB-KW"/>
</dbReference>
<dbReference type="GO" id="GO:0052170">
    <property type="term" value="P:symbiont-mediated suppression of host innate immune response"/>
    <property type="evidence" value="ECO:0007669"/>
    <property type="project" value="UniProtKB-KW"/>
</dbReference>
<dbReference type="GO" id="GO:0039576">
    <property type="term" value="P:symbiont-mediated suppression of host JAK-STAT cascade via inhibition of JAK1 activity"/>
    <property type="evidence" value="ECO:0007669"/>
    <property type="project" value="UniProtKB-KW"/>
</dbReference>
<dbReference type="GO" id="GO:0039502">
    <property type="term" value="P:symbiont-mediated suppression of host type I interferon-mediated signaling pathway"/>
    <property type="evidence" value="ECO:0007669"/>
    <property type="project" value="UniProtKB-KW"/>
</dbReference>
<dbReference type="CDD" id="cd06257">
    <property type="entry name" value="DnaJ"/>
    <property type="match status" value="1"/>
</dbReference>
<dbReference type="Gene3D" id="3.40.1310.20">
    <property type="match status" value="1"/>
</dbReference>
<dbReference type="Gene3D" id="1.10.287.110">
    <property type="entry name" value="DnaJ domain"/>
    <property type="match status" value="1"/>
</dbReference>
<dbReference type="Gene3D" id="1.20.1050.70">
    <property type="entry name" value="Large T antigen, SV40, domain 3"/>
    <property type="match status" value="1"/>
</dbReference>
<dbReference type="Gene3D" id="3.40.50.300">
    <property type="entry name" value="P-loop containing nucleotide triphosphate hydrolases"/>
    <property type="match status" value="1"/>
</dbReference>
<dbReference type="Gene3D" id="1.10.10.510">
    <property type="entry name" value="Zinc finger, large T-antigen D1 domain"/>
    <property type="match status" value="1"/>
</dbReference>
<dbReference type="InterPro" id="IPR001623">
    <property type="entry name" value="DnaJ_domain"/>
</dbReference>
<dbReference type="InterPro" id="IPR014015">
    <property type="entry name" value="Helicase_SF3_DNA-vir"/>
</dbReference>
<dbReference type="InterPro" id="IPR036869">
    <property type="entry name" value="J_dom_sf"/>
</dbReference>
<dbReference type="InterPro" id="IPR016392">
    <property type="entry name" value="Lg_T_Ag_polyomavir"/>
</dbReference>
<dbReference type="InterPro" id="IPR010932">
    <property type="entry name" value="Lg_T_Ag_Polyomavir_C"/>
</dbReference>
<dbReference type="InterPro" id="IPR027417">
    <property type="entry name" value="P-loop_NTPase"/>
</dbReference>
<dbReference type="InterPro" id="IPR003133">
    <property type="entry name" value="T_Ag_DNA-bd"/>
</dbReference>
<dbReference type="InterPro" id="IPR017910">
    <property type="entry name" value="Znf_lg_T-Ag_D1-typ"/>
</dbReference>
<dbReference type="InterPro" id="IPR037102">
    <property type="entry name" value="Znf_lg_T-Ag_D1_dom_sf"/>
</dbReference>
<dbReference type="Pfam" id="PF06431">
    <property type="entry name" value="Polyoma_lg_T_C"/>
    <property type="match status" value="1"/>
</dbReference>
<dbReference type="Pfam" id="PF02217">
    <property type="entry name" value="T_Ag_DNA_bind"/>
    <property type="match status" value="1"/>
</dbReference>
<dbReference type="PIRSF" id="PIRSF003368">
    <property type="entry name" value="Large_T_antigen_polyomaV"/>
    <property type="match status" value="1"/>
</dbReference>
<dbReference type="SMART" id="SM00271">
    <property type="entry name" value="DnaJ"/>
    <property type="match status" value="1"/>
</dbReference>
<dbReference type="SUPFAM" id="SSF46565">
    <property type="entry name" value="Chaperone J-domain"/>
    <property type="match status" value="1"/>
</dbReference>
<dbReference type="SUPFAM" id="SSF55464">
    <property type="entry name" value="Origin of replication-binding domain, RBD-like"/>
    <property type="match status" value="1"/>
</dbReference>
<dbReference type="SUPFAM" id="SSF52540">
    <property type="entry name" value="P-loop containing nucleoside triphosphate hydrolases"/>
    <property type="match status" value="1"/>
</dbReference>
<dbReference type="PROSITE" id="PS50076">
    <property type="entry name" value="DNAJ_2"/>
    <property type="match status" value="1"/>
</dbReference>
<dbReference type="PROSITE" id="PS51206">
    <property type="entry name" value="SF3_HELICASE_1"/>
    <property type="match status" value="1"/>
</dbReference>
<dbReference type="PROSITE" id="PS51287">
    <property type="entry name" value="T_AG_OBD"/>
    <property type="match status" value="1"/>
</dbReference>
<dbReference type="PROSITE" id="PS51341">
    <property type="entry name" value="ZF_LTAG_D1"/>
    <property type="match status" value="1"/>
</dbReference>
<proteinExistence type="evidence at transcript level"/>
<evidence type="ECO:0000250" key="1">
    <source>
        <dbReference type="UniProtKB" id="P03070"/>
    </source>
</evidence>
<evidence type="ECO:0000255" key="2">
    <source>
        <dbReference type="PROSITE-ProRule" id="PRU00286"/>
    </source>
</evidence>
<evidence type="ECO:0000255" key="3">
    <source>
        <dbReference type="PROSITE-ProRule" id="PRU00551"/>
    </source>
</evidence>
<evidence type="ECO:0000255" key="4">
    <source>
        <dbReference type="PROSITE-ProRule" id="PRU00620"/>
    </source>
</evidence>
<evidence type="ECO:0000255" key="5">
    <source>
        <dbReference type="PROSITE-ProRule" id="PRU00671"/>
    </source>
</evidence>
<evidence type="ECO:0000256" key="6">
    <source>
        <dbReference type="SAM" id="MobiDB-lite"/>
    </source>
</evidence>
<evidence type="ECO:0000305" key="7"/>